<organism>
    <name type="scientific">Klebsiella pneumoniae subsp. pneumoniae (strain ATCC 700721 / MGH 78578)</name>
    <dbReference type="NCBI Taxonomy" id="272620"/>
    <lineage>
        <taxon>Bacteria</taxon>
        <taxon>Pseudomonadati</taxon>
        <taxon>Pseudomonadota</taxon>
        <taxon>Gammaproteobacteria</taxon>
        <taxon>Enterobacterales</taxon>
        <taxon>Enterobacteriaceae</taxon>
        <taxon>Klebsiella/Raoultella group</taxon>
        <taxon>Klebsiella</taxon>
        <taxon>Klebsiella pneumoniae complex</taxon>
    </lineage>
</organism>
<sequence>MENLMASSNLIKQLQERGLVAQVTDEEALAERLAQGPIALYCGFDPTADSLHLGHLVPLLCLKRFQQAGHKPVALVGGATGLIGDPSFKAAERKLNTEDTVQEWVDKIRKQVAPFLDFDCGDNSAIAANNYDWFGSMNVLTFLRDIGKHFSVNQMINKEAVKQRLNRDDQGISFTEFSYNLLQGYDFACLNKLHGVALQIGGSDQWGNITSGIDLTRRLHQNQVFGLTVPLITKADGTKFGKTEGGAVWLDPKKTSPYKFYQFWINTADADVYRFLKFFTFMDIAEINALEEEDKNSGKAPRAQYVLAEQVTRLVHGEEGLEAAKRITESLFNGNLSDLSEADFEQLAQDGVPMIEMEKGADLLQALVDSELQPSRGQARKTVASNAVTINGEKQADPEYVFSDSDRLFGRYTLLRRGKKNYCLVCWK</sequence>
<reference key="1">
    <citation type="submission" date="2006-09" db="EMBL/GenBank/DDBJ databases">
        <authorList>
            <consortium name="The Klebsiella pneumonia Genome Sequencing Project"/>
            <person name="McClelland M."/>
            <person name="Sanderson E.K."/>
            <person name="Spieth J."/>
            <person name="Clifton W.S."/>
            <person name="Latreille P."/>
            <person name="Sabo A."/>
            <person name="Pepin K."/>
            <person name="Bhonagiri V."/>
            <person name="Porwollik S."/>
            <person name="Ali J."/>
            <person name="Wilson R.K."/>
        </authorList>
    </citation>
    <scope>NUCLEOTIDE SEQUENCE [LARGE SCALE GENOMIC DNA]</scope>
    <source>
        <strain>ATCC 700721 / MGH 78578</strain>
    </source>
</reference>
<protein>
    <recommendedName>
        <fullName evidence="1">Tyrosine--tRNA ligase</fullName>
        <ecNumber evidence="1">6.1.1.1</ecNumber>
    </recommendedName>
    <alternativeName>
        <fullName evidence="1">Tyrosyl-tRNA synthetase</fullName>
        <shortName evidence="1">TyrRS</shortName>
    </alternativeName>
</protein>
<keyword id="KW-0030">Aminoacyl-tRNA synthetase</keyword>
<keyword id="KW-0067">ATP-binding</keyword>
<keyword id="KW-0963">Cytoplasm</keyword>
<keyword id="KW-0436">Ligase</keyword>
<keyword id="KW-0547">Nucleotide-binding</keyword>
<keyword id="KW-0648">Protein biosynthesis</keyword>
<keyword id="KW-0694">RNA-binding</keyword>
<evidence type="ECO:0000255" key="1">
    <source>
        <dbReference type="HAMAP-Rule" id="MF_02006"/>
    </source>
</evidence>
<dbReference type="EC" id="6.1.1.1" evidence="1"/>
<dbReference type="EMBL" id="CP000647">
    <property type="protein sequence ID" value="ABR77406.1"/>
    <property type="molecule type" value="Genomic_DNA"/>
</dbReference>
<dbReference type="SMR" id="A6T9Y5"/>
<dbReference type="STRING" id="272620.KPN_01975"/>
<dbReference type="jPOST" id="A6T9Y5"/>
<dbReference type="PaxDb" id="272620-KPN_01975"/>
<dbReference type="EnsemblBacteria" id="ABR77406">
    <property type="protein sequence ID" value="ABR77406"/>
    <property type="gene ID" value="KPN_01975"/>
</dbReference>
<dbReference type="KEGG" id="kpn:KPN_01975"/>
<dbReference type="HOGENOM" id="CLU_024003_0_3_6"/>
<dbReference type="Proteomes" id="UP000000265">
    <property type="component" value="Chromosome"/>
</dbReference>
<dbReference type="GO" id="GO:0005829">
    <property type="term" value="C:cytosol"/>
    <property type="evidence" value="ECO:0007669"/>
    <property type="project" value="TreeGrafter"/>
</dbReference>
<dbReference type="GO" id="GO:0005524">
    <property type="term" value="F:ATP binding"/>
    <property type="evidence" value="ECO:0007669"/>
    <property type="project" value="UniProtKB-UniRule"/>
</dbReference>
<dbReference type="GO" id="GO:0003723">
    <property type="term" value="F:RNA binding"/>
    <property type="evidence" value="ECO:0007669"/>
    <property type="project" value="UniProtKB-KW"/>
</dbReference>
<dbReference type="GO" id="GO:0004831">
    <property type="term" value="F:tyrosine-tRNA ligase activity"/>
    <property type="evidence" value="ECO:0007669"/>
    <property type="project" value="UniProtKB-UniRule"/>
</dbReference>
<dbReference type="GO" id="GO:0006437">
    <property type="term" value="P:tyrosyl-tRNA aminoacylation"/>
    <property type="evidence" value="ECO:0007669"/>
    <property type="project" value="UniProtKB-UniRule"/>
</dbReference>
<dbReference type="CDD" id="cd00165">
    <property type="entry name" value="S4"/>
    <property type="match status" value="1"/>
</dbReference>
<dbReference type="CDD" id="cd00805">
    <property type="entry name" value="TyrRS_core"/>
    <property type="match status" value="1"/>
</dbReference>
<dbReference type="FunFam" id="1.10.240.10:FF:000001">
    <property type="entry name" value="Tyrosine--tRNA ligase"/>
    <property type="match status" value="1"/>
</dbReference>
<dbReference type="FunFam" id="3.10.290.10:FF:000007">
    <property type="entry name" value="Tyrosine--tRNA ligase"/>
    <property type="match status" value="1"/>
</dbReference>
<dbReference type="FunFam" id="3.40.50.620:FF:000008">
    <property type="entry name" value="Tyrosine--tRNA ligase"/>
    <property type="match status" value="1"/>
</dbReference>
<dbReference type="Gene3D" id="3.40.50.620">
    <property type="entry name" value="HUPs"/>
    <property type="match status" value="1"/>
</dbReference>
<dbReference type="Gene3D" id="3.10.290.10">
    <property type="entry name" value="RNA-binding S4 domain"/>
    <property type="match status" value="1"/>
</dbReference>
<dbReference type="Gene3D" id="1.10.240.10">
    <property type="entry name" value="Tyrosyl-Transfer RNA Synthetase"/>
    <property type="match status" value="1"/>
</dbReference>
<dbReference type="HAMAP" id="MF_02006">
    <property type="entry name" value="Tyr_tRNA_synth_type1"/>
    <property type="match status" value="1"/>
</dbReference>
<dbReference type="InterPro" id="IPR001412">
    <property type="entry name" value="aa-tRNA-synth_I_CS"/>
</dbReference>
<dbReference type="InterPro" id="IPR002305">
    <property type="entry name" value="aa-tRNA-synth_Ic"/>
</dbReference>
<dbReference type="InterPro" id="IPR014729">
    <property type="entry name" value="Rossmann-like_a/b/a_fold"/>
</dbReference>
<dbReference type="InterPro" id="IPR002942">
    <property type="entry name" value="S4_RNA-bd"/>
</dbReference>
<dbReference type="InterPro" id="IPR036986">
    <property type="entry name" value="S4_RNA-bd_sf"/>
</dbReference>
<dbReference type="InterPro" id="IPR054608">
    <property type="entry name" value="SYY-like_C"/>
</dbReference>
<dbReference type="InterPro" id="IPR002307">
    <property type="entry name" value="Tyr-tRNA-ligase"/>
</dbReference>
<dbReference type="InterPro" id="IPR024088">
    <property type="entry name" value="Tyr-tRNA-ligase_bac-type"/>
</dbReference>
<dbReference type="InterPro" id="IPR024107">
    <property type="entry name" value="Tyr-tRNA-ligase_bac_1"/>
</dbReference>
<dbReference type="NCBIfam" id="TIGR00234">
    <property type="entry name" value="tyrS"/>
    <property type="match status" value="1"/>
</dbReference>
<dbReference type="PANTHER" id="PTHR11766:SF0">
    <property type="entry name" value="TYROSINE--TRNA LIGASE, MITOCHONDRIAL"/>
    <property type="match status" value="1"/>
</dbReference>
<dbReference type="PANTHER" id="PTHR11766">
    <property type="entry name" value="TYROSYL-TRNA SYNTHETASE"/>
    <property type="match status" value="1"/>
</dbReference>
<dbReference type="Pfam" id="PF22421">
    <property type="entry name" value="SYY_C-terminal"/>
    <property type="match status" value="1"/>
</dbReference>
<dbReference type="Pfam" id="PF00579">
    <property type="entry name" value="tRNA-synt_1b"/>
    <property type="match status" value="1"/>
</dbReference>
<dbReference type="PRINTS" id="PR01040">
    <property type="entry name" value="TRNASYNTHTYR"/>
</dbReference>
<dbReference type="SMART" id="SM00363">
    <property type="entry name" value="S4"/>
    <property type="match status" value="1"/>
</dbReference>
<dbReference type="SUPFAM" id="SSF55174">
    <property type="entry name" value="Alpha-L RNA-binding motif"/>
    <property type="match status" value="1"/>
</dbReference>
<dbReference type="SUPFAM" id="SSF52374">
    <property type="entry name" value="Nucleotidylyl transferase"/>
    <property type="match status" value="1"/>
</dbReference>
<dbReference type="PROSITE" id="PS00178">
    <property type="entry name" value="AA_TRNA_LIGASE_I"/>
    <property type="match status" value="1"/>
</dbReference>
<dbReference type="PROSITE" id="PS50889">
    <property type="entry name" value="S4"/>
    <property type="match status" value="1"/>
</dbReference>
<proteinExistence type="inferred from homology"/>
<comment type="function">
    <text evidence="1">Catalyzes the attachment of tyrosine to tRNA(Tyr) in a two-step reaction: tyrosine is first activated by ATP to form Tyr-AMP and then transferred to the acceptor end of tRNA(Tyr).</text>
</comment>
<comment type="catalytic activity">
    <reaction evidence="1">
        <text>tRNA(Tyr) + L-tyrosine + ATP = L-tyrosyl-tRNA(Tyr) + AMP + diphosphate + H(+)</text>
        <dbReference type="Rhea" id="RHEA:10220"/>
        <dbReference type="Rhea" id="RHEA-COMP:9706"/>
        <dbReference type="Rhea" id="RHEA-COMP:9707"/>
        <dbReference type="ChEBI" id="CHEBI:15378"/>
        <dbReference type="ChEBI" id="CHEBI:30616"/>
        <dbReference type="ChEBI" id="CHEBI:33019"/>
        <dbReference type="ChEBI" id="CHEBI:58315"/>
        <dbReference type="ChEBI" id="CHEBI:78442"/>
        <dbReference type="ChEBI" id="CHEBI:78536"/>
        <dbReference type="ChEBI" id="CHEBI:456215"/>
        <dbReference type="EC" id="6.1.1.1"/>
    </reaction>
</comment>
<comment type="subunit">
    <text evidence="1">Homodimer.</text>
</comment>
<comment type="subcellular location">
    <subcellularLocation>
        <location evidence="1">Cytoplasm</location>
    </subcellularLocation>
</comment>
<comment type="similarity">
    <text evidence="1">Belongs to the class-I aminoacyl-tRNA synthetase family. TyrS type 1 subfamily.</text>
</comment>
<accession>A6T9Y5</accession>
<feature type="chain" id="PRO_1000088594" description="Tyrosine--tRNA ligase">
    <location>
        <begin position="1"/>
        <end position="428"/>
    </location>
</feature>
<feature type="domain" description="S4 RNA-binding" evidence="1">
    <location>
        <begin position="361"/>
        <end position="418"/>
    </location>
</feature>
<feature type="short sequence motif" description="'HIGH' region">
    <location>
        <begin position="46"/>
        <end position="55"/>
    </location>
</feature>
<feature type="short sequence motif" description="'KMSKS' region">
    <location>
        <begin position="239"/>
        <end position="243"/>
    </location>
</feature>
<feature type="binding site" evidence="1">
    <location>
        <position position="41"/>
    </location>
    <ligand>
        <name>L-tyrosine</name>
        <dbReference type="ChEBI" id="CHEBI:58315"/>
    </ligand>
</feature>
<feature type="binding site" evidence="1">
    <location>
        <position position="179"/>
    </location>
    <ligand>
        <name>L-tyrosine</name>
        <dbReference type="ChEBI" id="CHEBI:58315"/>
    </ligand>
</feature>
<feature type="binding site" evidence="1">
    <location>
        <position position="183"/>
    </location>
    <ligand>
        <name>L-tyrosine</name>
        <dbReference type="ChEBI" id="CHEBI:58315"/>
    </ligand>
</feature>
<feature type="binding site" evidence="1">
    <location>
        <position position="242"/>
    </location>
    <ligand>
        <name>ATP</name>
        <dbReference type="ChEBI" id="CHEBI:30616"/>
    </ligand>
</feature>
<name>SYY_KLEP7</name>
<gene>
    <name evidence="1" type="primary">tyrS</name>
    <name type="ordered locus">KPN78578_19450</name>
    <name type="ORF">KPN_01975</name>
</gene>